<protein>
    <recommendedName>
        <fullName evidence="1">Large ribosomal subunit protein bL12</fullName>
    </recommendedName>
    <alternativeName>
        <fullName evidence="2">50S ribosomal protein L7/L12</fullName>
    </alternativeName>
</protein>
<gene>
    <name evidence="1" type="primary">rplL</name>
    <name type="ordered locus">BCI_0501</name>
</gene>
<organism>
    <name type="scientific">Baumannia cicadellinicola subsp. Homalodisca coagulata</name>
    <dbReference type="NCBI Taxonomy" id="374463"/>
    <lineage>
        <taxon>Bacteria</taxon>
        <taxon>Pseudomonadati</taxon>
        <taxon>Pseudomonadota</taxon>
        <taxon>Gammaproteobacteria</taxon>
        <taxon>Candidatus Palibaumannia</taxon>
    </lineage>
</organism>
<name>RL7_BAUCH</name>
<dbReference type="EMBL" id="CP000238">
    <property type="protein sequence ID" value="ABF14004.1"/>
    <property type="molecule type" value="Genomic_DNA"/>
</dbReference>
<dbReference type="RefSeq" id="WP_011520669.1">
    <property type="nucleotide sequence ID" value="NC_007984.1"/>
</dbReference>
<dbReference type="SMR" id="Q1LSX8"/>
<dbReference type="STRING" id="374463.BCI_0501"/>
<dbReference type="KEGG" id="bci:BCI_0501"/>
<dbReference type="HOGENOM" id="CLU_086499_3_2_6"/>
<dbReference type="OrthoDB" id="9811748at2"/>
<dbReference type="Proteomes" id="UP000002427">
    <property type="component" value="Chromosome"/>
</dbReference>
<dbReference type="GO" id="GO:0022625">
    <property type="term" value="C:cytosolic large ribosomal subunit"/>
    <property type="evidence" value="ECO:0007669"/>
    <property type="project" value="TreeGrafter"/>
</dbReference>
<dbReference type="GO" id="GO:0003729">
    <property type="term" value="F:mRNA binding"/>
    <property type="evidence" value="ECO:0007669"/>
    <property type="project" value="TreeGrafter"/>
</dbReference>
<dbReference type="GO" id="GO:0003735">
    <property type="term" value="F:structural constituent of ribosome"/>
    <property type="evidence" value="ECO:0007669"/>
    <property type="project" value="InterPro"/>
</dbReference>
<dbReference type="GO" id="GO:0006412">
    <property type="term" value="P:translation"/>
    <property type="evidence" value="ECO:0007669"/>
    <property type="project" value="UniProtKB-UniRule"/>
</dbReference>
<dbReference type="CDD" id="cd00387">
    <property type="entry name" value="Ribosomal_L7_L12"/>
    <property type="match status" value="1"/>
</dbReference>
<dbReference type="FunFam" id="3.30.1390.10:FF:000001">
    <property type="entry name" value="50S ribosomal protein L7/L12"/>
    <property type="match status" value="1"/>
</dbReference>
<dbReference type="Gene3D" id="3.30.1390.10">
    <property type="match status" value="1"/>
</dbReference>
<dbReference type="Gene3D" id="1.20.5.710">
    <property type="entry name" value="Single helix bin"/>
    <property type="match status" value="1"/>
</dbReference>
<dbReference type="HAMAP" id="MF_00368">
    <property type="entry name" value="Ribosomal_bL12"/>
    <property type="match status" value="1"/>
</dbReference>
<dbReference type="InterPro" id="IPR000206">
    <property type="entry name" value="Ribosomal_bL12"/>
</dbReference>
<dbReference type="InterPro" id="IPR013823">
    <property type="entry name" value="Ribosomal_bL12_C"/>
</dbReference>
<dbReference type="InterPro" id="IPR014719">
    <property type="entry name" value="Ribosomal_bL12_C/ClpS-like"/>
</dbReference>
<dbReference type="InterPro" id="IPR008932">
    <property type="entry name" value="Ribosomal_bL12_oligo"/>
</dbReference>
<dbReference type="InterPro" id="IPR036235">
    <property type="entry name" value="Ribosomal_bL12_oligo_N_sf"/>
</dbReference>
<dbReference type="NCBIfam" id="TIGR00855">
    <property type="entry name" value="L12"/>
    <property type="match status" value="1"/>
</dbReference>
<dbReference type="PANTHER" id="PTHR45987">
    <property type="entry name" value="39S RIBOSOMAL PROTEIN L12"/>
    <property type="match status" value="1"/>
</dbReference>
<dbReference type="PANTHER" id="PTHR45987:SF4">
    <property type="entry name" value="LARGE RIBOSOMAL SUBUNIT PROTEIN BL12M"/>
    <property type="match status" value="1"/>
</dbReference>
<dbReference type="Pfam" id="PF00542">
    <property type="entry name" value="Ribosomal_L12"/>
    <property type="match status" value="1"/>
</dbReference>
<dbReference type="Pfam" id="PF16320">
    <property type="entry name" value="Ribosomal_L12_N"/>
    <property type="match status" value="1"/>
</dbReference>
<dbReference type="SUPFAM" id="SSF54736">
    <property type="entry name" value="ClpS-like"/>
    <property type="match status" value="1"/>
</dbReference>
<dbReference type="SUPFAM" id="SSF48300">
    <property type="entry name" value="Ribosomal protein L7/12, oligomerisation (N-terminal) domain"/>
    <property type="match status" value="1"/>
</dbReference>
<keyword id="KW-1185">Reference proteome</keyword>
<keyword id="KW-0687">Ribonucleoprotein</keyword>
<keyword id="KW-0689">Ribosomal protein</keyword>
<proteinExistence type="inferred from homology"/>
<reference key="1">
    <citation type="journal article" date="2006" name="PLoS Biol.">
        <title>Metabolic complementarity and genomics of the dual bacterial symbiosis of sharpshooters.</title>
        <authorList>
            <person name="Wu D."/>
            <person name="Daugherty S.C."/>
            <person name="Van Aken S.E."/>
            <person name="Pai G.H."/>
            <person name="Watkins K.L."/>
            <person name="Khouri H."/>
            <person name="Tallon L.J."/>
            <person name="Zaborsky J.M."/>
            <person name="Dunbar H.E."/>
            <person name="Tran P.L."/>
            <person name="Moran N.A."/>
            <person name="Eisen J.A."/>
        </authorList>
    </citation>
    <scope>NUCLEOTIDE SEQUENCE [LARGE SCALE GENOMIC DNA]</scope>
</reference>
<feature type="chain" id="PRO_1000006962" description="Large ribosomal subunit protein bL12">
    <location>
        <begin position="1"/>
        <end position="121"/>
    </location>
</feature>
<comment type="function">
    <text evidence="1">Forms part of the ribosomal stalk which helps the ribosome interact with GTP-bound translation factors. Is thus essential for accurate translation.</text>
</comment>
<comment type="subunit">
    <text evidence="1">Homodimer. Part of the ribosomal stalk of the 50S ribosomal subunit. Forms a multimeric L10(L12)X complex, where L10 forms an elongated spine to which 2 to 4 L12 dimers bind in a sequential fashion. Binds GTP-bound translation factors.</text>
</comment>
<comment type="similarity">
    <text evidence="1">Belongs to the bacterial ribosomal protein bL12 family.</text>
</comment>
<evidence type="ECO:0000255" key="1">
    <source>
        <dbReference type="HAMAP-Rule" id="MF_00368"/>
    </source>
</evidence>
<evidence type="ECO:0000305" key="2"/>
<sequence length="121" mass="12915">MSLTKEQILEAVAKMSILDITELISMMEQKFGVSSINTIVPTSSPAETVEEKTEFDVVLTNIGANKIAVIKAVRGVISLGLKEAKDLVESAPITLKESISKDEAAALKKILEDAGASVEIK</sequence>
<accession>Q1LSX8</accession>